<proteinExistence type="inferred from homology"/>
<dbReference type="EC" id="1.7.1.13" evidence="1"/>
<dbReference type="EMBL" id="AE015929">
    <property type="protein sequence ID" value="AAO04107.1"/>
    <property type="molecule type" value="Genomic_DNA"/>
</dbReference>
<dbReference type="RefSeq" id="NP_764065.1">
    <property type="nucleotide sequence ID" value="NC_004461.1"/>
</dbReference>
<dbReference type="RefSeq" id="WP_001832596.1">
    <property type="nucleotide sequence ID" value="NZ_WBME01000015.1"/>
</dbReference>
<dbReference type="SMR" id="Q8CTG5"/>
<dbReference type="GeneID" id="50019343"/>
<dbReference type="KEGG" id="sep:SE_0510"/>
<dbReference type="PATRIC" id="fig|176280.10.peg.482"/>
<dbReference type="eggNOG" id="COG0780">
    <property type="taxonomic scope" value="Bacteria"/>
</dbReference>
<dbReference type="HOGENOM" id="CLU_102489_0_1_9"/>
<dbReference type="OrthoDB" id="9795077at2"/>
<dbReference type="UniPathway" id="UPA00392"/>
<dbReference type="Proteomes" id="UP000001411">
    <property type="component" value="Chromosome"/>
</dbReference>
<dbReference type="GO" id="GO:0005737">
    <property type="term" value="C:cytoplasm"/>
    <property type="evidence" value="ECO:0007669"/>
    <property type="project" value="UniProtKB-SubCell"/>
</dbReference>
<dbReference type="GO" id="GO:0033739">
    <property type="term" value="F:preQ1 synthase activity"/>
    <property type="evidence" value="ECO:0007669"/>
    <property type="project" value="UniProtKB-UniRule"/>
</dbReference>
<dbReference type="GO" id="GO:0008616">
    <property type="term" value="P:queuosine biosynthetic process"/>
    <property type="evidence" value="ECO:0007669"/>
    <property type="project" value="UniProtKB-UniRule"/>
</dbReference>
<dbReference type="GO" id="GO:0006400">
    <property type="term" value="P:tRNA modification"/>
    <property type="evidence" value="ECO:0007669"/>
    <property type="project" value="UniProtKB-UniRule"/>
</dbReference>
<dbReference type="Gene3D" id="3.30.1130.10">
    <property type="match status" value="1"/>
</dbReference>
<dbReference type="HAMAP" id="MF_00818">
    <property type="entry name" value="QueF_type1"/>
    <property type="match status" value="1"/>
</dbReference>
<dbReference type="InterPro" id="IPR043133">
    <property type="entry name" value="GTP-CH-I_C/QueF"/>
</dbReference>
<dbReference type="InterPro" id="IPR050084">
    <property type="entry name" value="NADPH_dep_7-cyano-7-deazaG_red"/>
</dbReference>
<dbReference type="InterPro" id="IPR029500">
    <property type="entry name" value="QueF"/>
</dbReference>
<dbReference type="InterPro" id="IPR016856">
    <property type="entry name" value="QueF_type1"/>
</dbReference>
<dbReference type="NCBIfam" id="TIGR03139">
    <property type="entry name" value="QueF-II"/>
    <property type="match status" value="1"/>
</dbReference>
<dbReference type="PANTHER" id="PTHR34354">
    <property type="entry name" value="NADPH-DEPENDENT 7-CYANO-7-DEAZAGUANINE REDUCTASE"/>
    <property type="match status" value="1"/>
</dbReference>
<dbReference type="PANTHER" id="PTHR34354:SF1">
    <property type="entry name" value="NADPH-DEPENDENT 7-CYANO-7-DEAZAGUANINE REDUCTASE"/>
    <property type="match status" value="1"/>
</dbReference>
<dbReference type="Pfam" id="PF14489">
    <property type="entry name" value="QueF"/>
    <property type="match status" value="1"/>
</dbReference>
<dbReference type="PIRSF" id="PIRSF027377">
    <property type="entry name" value="Nitrile_oxidored_QueF"/>
    <property type="match status" value="1"/>
</dbReference>
<dbReference type="SUPFAM" id="SSF55620">
    <property type="entry name" value="Tetrahydrobiopterin biosynthesis enzymes-like"/>
    <property type="match status" value="1"/>
</dbReference>
<sequence length="166" mass="19740">MTQGRQKDELKDITLLGNQNNTYEFDYRPEVLETFDNKHQGRDYFVKFNCPEFTSLCPITGQPDFATIYISYIPNIKMVESKSLKLYLFSFRNHGDFHEDCMNIIMNDLINLMDPHYIEVWGKFTPRGGISIDPYTNYGRPDTKYEKMAEHRLMNHDMYPEKIDNR</sequence>
<reference key="1">
    <citation type="journal article" date="2003" name="Mol. Microbiol.">
        <title>Genome-based analysis of virulence genes in a non-biofilm-forming Staphylococcus epidermidis strain (ATCC 12228).</title>
        <authorList>
            <person name="Zhang Y.-Q."/>
            <person name="Ren S.-X."/>
            <person name="Li H.-L."/>
            <person name="Wang Y.-X."/>
            <person name="Fu G."/>
            <person name="Yang J."/>
            <person name="Qin Z.-Q."/>
            <person name="Miao Y.-G."/>
            <person name="Wang W.-Y."/>
            <person name="Chen R.-S."/>
            <person name="Shen Y."/>
            <person name="Chen Z."/>
            <person name="Yuan Z.-H."/>
            <person name="Zhao G.-P."/>
            <person name="Qu D."/>
            <person name="Danchin A."/>
            <person name="Wen Y.-M."/>
        </authorList>
    </citation>
    <scope>NUCLEOTIDE SEQUENCE [LARGE SCALE GENOMIC DNA]</scope>
    <source>
        <strain>ATCC 12228 / FDA PCI 1200</strain>
    </source>
</reference>
<organism>
    <name type="scientific">Staphylococcus epidermidis (strain ATCC 12228 / FDA PCI 1200)</name>
    <dbReference type="NCBI Taxonomy" id="176280"/>
    <lineage>
        <taxon>Bacteria</taxon>
        <taxon>Bacillati</taxon>
        <taxon>Bacillota</taxon>
        <taxon>Bacilli</taxon>
        <taxon>Bacillales</taxon>
        <taxon>Staphylococcaceae</taxon>
        <taxon>Staphylococcus</taxon>
    </lineage>
</organism>
<name>QUEF_STAES</name>
<comment type="function">
    <text evidence="1">Catalyzes the NADPH-dependent reduction of 7-cyano-7-deazaguanine (preQ0) to 7-aminomethyl-7-deazaguanine (preQ1).</text>
</comment>
<comment type="catalytic activity">
    <reaction evidence="1">
        <text>7-aminomethyl-7-carbaguanine + 2 NADP(+) = 7-cyano-7-deazaguanine + 2 NADPH + 3 H(+)</text>
        <dbReference type="Rhea" id="RHEA:13409"/>
        <dbReference type="ChEBI" id="CHEBI:15378"/>
        <dbReference type="ChEBI" id="CHEBI:45075"/>
        <dbReference type="ChEBI" id="CHEBI:57783"/>
        <dbReference type="ChEBI" id="CHEBI:58349"/>
        <dbReference type="ChEBI" id="CHEBI:58703"/>
        <dbReference type="EC" id="1.7.1.13"/>
    </reaction>
</comment>
<comment type="pathway">
    <text evidence="1">tRNA modification; tRNA-queuosine biosynthesis.</text>
</comment>
<comment type="subcellular location">
    <subcellularLocation>
        <location evidence="1">Cytoplasm</location>
    </subcellularLocation>
</comment>
<comment type="similarity">
    <text evidence="1">Belongs to the GTP cyclohydrolase I family. QueF type 1 subfamily.</text>
</comment>
<feature type="chain" id="PRO_0000163000" description="NADPH-dependent 7-cyano-7-deazaguanine reductase">
    <location>
        <begin position="1"/>
        <end position="166"/>
    </location>
</feature>
<feature type="active site" description="Thioimide intermediate" evidence="1">
    <location>
        <position position="57"/>
    </location>
</feature>
<feature type="active site" description="Proton donor" evidence="1">
    <location>
        <position position="64"/>
    </location>
</feature>
<feature type="binding site" evidence="1">
    <location>
        <begin position="79"/>
        <end position="81"/>
    </location>
    <ligand>
        <name>substrate</name>
    </ligand>
</feature>
<feature type="binding site" evidence="1">
    <location>
        <begin position="98"/>
        <end position="99"/>
    </location>
    <ligand>
        <name>substrate</name>
    </ligand>
</feature>
<gene>
    <name evidence="1" type="primary">queF</name>
    <name type="ordered locus">SE_0510</name>
</gene>
<evidence type="ECO:0000255" key="1">
    <source>
        <dbReference type="HAMAP-Rule" id="MF_00818"/>
    </source>
</evidence>
<keyword id="KW-0963">Cytoplasm</keyword>
<keyword id="KW-0521">NADP</keyword>
<keyword id="KW-0560">Oxidoreductase</keyword>
<keyword id="KW-0671">Queuosine biosynthesis</keyword>
<accession>Q8CTG5</accession>
<protein>
    <recommendedName>
        <fullName evidence="1">NADPH-dependent 7-cyano-7-deazaguanine reductase</fullName>
        <ecNumber evidence="1">1.7.1.13</ecNumber>
    </recommendedName>
    <alternativeName>
        <fullName evidence="1">7-cyano-7-carbaguanine reductase</fullName>
    </alternativeName>
    <alternativeName>
        <fullName evidence="1">NADPH-dependent nitrile oxidoreductase</fullName>
    </alternativeName>
    <alternativeName>
        <fullName evidence="1">PreQ(0) reductase</fullName>
    </alternativeName>
</protein>